<feature type="initiator methionine" description="Removed" evidence="2">
    <location>
        <position position="1"/>
    </location>
</feature>
<feature type="chain" id="PRO_0000363543" description="Pentatricopeptide repeat-containing protein At5g39680">
    <location>
        <begin position="2"/>
        <end position="710"/>
    </location>
</feature>
<feature type="repeat" description="PPR 1">
    <location>
        <begin position="35"/>
        <end position="64"/>
    </location>
</feature>
<feature type="repeat" description="PPR 2">
    <location>
        <begin position="68"/>
        <end position="98"/>
    </location>
</feature>
<feature type="repeat" description="PPR 3">
    <location>
        <begin position="99"/>
        <end position="133"/>
    </location>
</feature>
<feature type="repeat" description="PPR 4">
    <location>
        <begin position="135"/>
        <end position="169"/>
    </location>
</feature>
<feature type="repeat" description="PPR 5">
    <location>
        <begin position="170"/>
        <end position="200"/>
    </location>
</feature>
<feature type="repeat" description="PPR 6">
    <location>
        <begin position="201"/>
        <end position="235"/>
    </location>
</feature>
<feature type="repeat" description="PPR 7">
    <location>
        <begin position="236"/>
        <end position="270"/>
    </location>
</feature>
<feature type="repeat" description="PPR 8">
    <location>
        <begin position="271"/>
        <end position="301"/>
    </location>
</feature>
<feature type="repeat" description="PPR 9">
    <location>
        <begin position="302"/>
        <end position="336"/>
    </location>
</feature>
<feature type="repeat" description="PPR 10">
    <location>
        <begin position="337"/>
        <end position="371"/>
    </location>
</feature>
<feature type="repeat" description="PPR 11">
    <location>
        <begin position="372"/>
        <end position="402"/>
    </location>
</feature>
<feature type="repeat" description="PPR 12">
    <location>
        <begin position="403"/>
        <end position="437"/>
    </location>
</feature>
<feature type="repeat" description="PPR 13">
    <location>
        <begin position="438"/>
        <end position="473"/>
    </location>
</feature>
<feature type="repeat" description="PPR 14">
    <location>
        <begin position="474"/>
        <end position="504"/>
    </location>
</feature>
<feature type="region of interest" description="Type E motif">
    <location>
        <begin position="509"/>
        <end position="584"/>
    </location>
</feature>
<feature type="region of interest" description="Type E(+) motif">
    <location>
        <begin position="585"/>
        <end position="615"/>
    </location>
</feature>
<feature type="region of interest" description="Type DYW motif">
    <location>
        <begin position="616"/>
        <end position="710"/>
    </location>
</feature>
<feature type="modified residue" description="N-acetylserine" evidence="2">
    <location>
        <position position="2"/>
    </location>
</feature>
<name>PP406_ARATH</name>
<gene>
    <name type="primary">EMB2744</name>
    <name type="synonym">PCMP-H39</name>
    <name type="ordered locus">At5g39680</name>
    <name type="ORF">MIJ24.150</name>
</gene>
<comment type="similarity">
    <text evidence="1">Belongs to the PPR family. PCMP-H subfamily.</text>
</comment>
<comment type="sequence caution" evidence="1">
    <conflict type="frameshift">
        <sequence resource="EMBL" id="BX832481"/>
    </conflict>
</comment>
<comment type="online information" name="Pentatricopeptide repeat proteins">
    <link uri="https://ppr.plantenergy.uwa.edu.au"/>
</comment>
<sequence length="710" mass="80844">MSALSVIEQRLLKWDKLASLVPKSKKTPFPIDRLNELLKVCANSSYLRIGESIHAHLIVTNQSSRAEDAYQINSLINLYVKCRETVRARKLFDLMPERNVVSWCAMMKGYQNSGFDFEVLKLFKSMFFSGESRPNEFVATVVFKSCSNSGRIEEGKQFHGCFLKYGLISHEFVRNTLVYMYSLCSGNGEAIRVLDDLPYCDLSVFSSALSGYLECGAFKEGLDVLRKTANEDFVWNNLTYLSSLRLFSNLRDLNLALQVHSRMVRFGFNAEVEACGALINMYGKCGKVLYAQRVFDDTHAQNIFLNTTIMDAYFQDKSFEEALNLFSKMDTKEVPPNEYTFAILLNSIAELSLLKQGDLLHGLVLKSGYRNHVMVGNALVNMYAKSGSIEDARKAFSGMTFRDIVTWNTMISGCSHHGLGREALEAFDRMIFTGEIPNRITFIGVLQACSHIGFVEQGLHYFNQLMKKFDVQPDIQHYTCIVGLLSKAGMFKDAEDFMRTAPIEWDVVAWRTLLNACYVRRNYRLGKKVAEYAIEKYPNDSGVYVLLSNIHAKSREWEGVAKVRSLMNNRGVKKEPGVSWIGIRNQTHVFLAEDNQHPEITLIYAKVKEVMSKIKPLGYSPDVAGAFHDVDEEQREDNLSYHSEKLAVAYGLIKTPEKSPLYVTKNVRICDDCHSAIKLISKISKRYIVIRDSNRFHHFLDGQCSCCDYW</sequence>
<reference key="1">
    <citation type="journal article" date="1998" name="DNA Res.">
        <title>Structural analysis of Arabidopsis thaliana chromosome 5. VI. Sequence features of the regions of 1,367,185 bp covered by 19 physically assigned P1 and TAC clones.</title>
        <authorList>
            <person name="Kotani H."/>
            <person name="Nakamura Y."/>
            <person name="Sato S."/>
            <person name="Asamizu E."/>
            <person name="Kaneko T."/>
            <person name="Miyajima N."/>
            <person name="Tabata S."/>
        </authorList>
    </citation>
    <scope>NUCLEOTIDE SEQUENCE [LARGE SCALE GENOMIC DNA]</scope>
    <source>
        <strain>cv. Columbia</strain>
    </source>
</reference>
<reference key="2">
    <citation type="journal article" date="2017" name="Plant J.">
        <title>Araport11: a complete reannotation of the Arabidopsis thaliana reference genome.</title>
        <authorList>
            <person name="Cheng C.Y."/>
            <person name="Krishnakumar V."/>
            <person name="Chan A.P."/>
            <person name="Thibaud-Nissen F."/>
            <person name="Schobel S."/>
            <person name="Town C.D."/>
        </authorList>
    </citation>
    <scope>GENOME REANNOTATION</scope>
    <source>
        <strain>cv. Columbia</strain>
    </source>
</reference>
<reference key="3">
    <citation type="journal article" date="2004" name="Genome Res.">
        <title>Whole genome sequence comparisons and 'full-length' cDNA sequences: a combined approach to evaluate and improve Arabidopsis genome annotation.</title>
        <authorList>
            <person name="Castelli V."/>
            <person name="Aury J.-M."/>
            <person name="Jaillon O."/>
            <person name="Wincker P."/>
            <person name="Clepet C."/>
            <person name="Menard M."/>
            <person name="Cruaud C."/>
            <person name="Quetier F."/>
            <person name="Scarpelli C."/>
            <person name="Schaechter V."/>
            <person name="Temple G."/>
            <person name="Caboche M."/>
            <person name="Weissenbach J."/>
            <person name="Salanoubat M."/>
        </authorList>
    </citation>
    <scope>NUCLEOTIDE SEQUENCE [LARGE SCALE MRNA]</scope>
    <source>
        <strain>cv. Columbia</strain>
    </source>
</reference>
<reference key="4">
    <citation type="journal article" date="2000" name="Plant Mol. Biol.">
        <title>In Arabidopsis thaliana, 1% of the genome codes for a novel protein family unique to plants.</title>
        <authorList>
            <person name="Aubourg S."/>
            <person name="Boudet N."/>
            <person name="Kreis M."/>
            <person name="Lecharny A."/>
        </authorList>
    </citation>
    <scope>GENE FAMILY</scope>
</reference>
<reference key="5">
    <citation type="journal article" date="2004" name="Plant Cell">
        <title>Genome-wide analysis of Arabidopsis pentatricopeptide repeat proteins reveals their essential role in organelle biogenesis.</title>
        <authorList>
            <person name="Lurin C."/>
            <person name="Andres C."/>
            <person name="Aubourg S."/>
            <person name="Bellaoui M."/>
            <person name="Bitton F."/>
            <person name="Bruyere C."/>
            <person name="Caboche M."/>
            <person name="Debast C."/>
            <person name="Gualberto J."/>
            <person name="Hoffmann B."/>
            <person name="Lecharny A."/>
            <person name="Le Ret M."/>
            <person name="Martin-Magniette M.-L."/>
            <person name="Mireau H."/>
            <person name="Peeters N."/>
            <person name="Renou J.-P."/>
            <person name="Szurek B."/>
            <person name="Taconnat L."/>
            <person name="Small I."/>
        </authorList>
    </citation>
    <scope>GENE FAMILY</scope>
</reference>
<reference key="6">
    <citation type="journal article" date="2012" name="Mol. Cell. Proteomics">
        <title>Comparative large-scale characterisation of plant vs. mammal proteins reveals similar and idiosyncratic N-alpha acetylation features.</title>
        <authorList>
            <person name="Bienvenut W.V."/>
            <person name="Sumpton D."/>
            <person name="Martinez A."/>
            <person name="Lilla S."/>
            <person name="Espagne C."/>
            <person name="Meinnel T."/>
            <person name="Giglione C."/>
        </authorList>
    </citation>
    <scope>ACETYLATION [LARGE SCALE ANALYSIS] AT SER-2</scope>
    <scope>CLEAVAGE OF INITIATOR METHIONINE [LARGE SCALE ANALYSIS]</scope>
    <scope>IDENTIFICATION BY MASS SPECTROMETRY [LARGE SCALE ANALYSIS]</scope>
</reference>
<evidence type="ECO:0000305" key="1"/>
<evidence type="ECO:0007744" key="2">
    <source>
    </source>
</evidence>
<organism>
    <name type="scientific">Arabidopsis thaliana</name>
    <name type="common">Mouse-ear cress</name>
    <dbReference type="NCBI Taxonomy" id="3702"/>
    <lineage>
        <taxon>Eukaryota</taxon>
        <taxon>Viridiplantae</taxon>
        <taxon>Streptophyta</taxon>
        <taxon>Embryophyta</taxon>
        <taxon>Tracheophyta</taxon>
        <taxon>Spermatophyta</taxon>
        <taxon>Magnoliopsida</taxon>
        <taxon>eudicotyledons</taxon>
        <taxon>Gunneridae</taxon>
        <taxon>Pentapetalae</taxon>
        <taxon>rosids</taxon>
        <taxon>malvids</taxon>
        <taxon>Brassicales</taxon>
        <taxon>Brassicaceae</taxon>
        <taxon>Camelineae</taxon>
        <taxon>Arabidopsis</taxon>
    </lineage>
</organism>
<accession>Q9FK93</accession>
<proteinExistence type="evidence at protein level"/>
<dbReference type="EMBL" id="AB012243">
    <property type="protein sequence ID" value="BAB08900.1"/>
    <property type="molecule type" value="Genomic_DNA"/>
</dbReference>
<dbReference type="EMBL" id="CP002688">
    <property type="protein sequence ID" value="AED94463.1"/>
    <property type="molecule type" value="Genomic_DNA"/>
</dbReference>
<dbReference type="EMBL" id="BX832481">
    <property type="status" value="NOT_ANNOTATED_CDS"/>
    <property type="molecule type" value="mRNA"/>
</dbReference>
<dbReference type="RefSeq" id="NP_198784.1">
    <property type="nucleotide sequence ID" value="NM_123330.3"/>
</dbReference>
<dbReference type="SMR" id="Q9FK93"/>
<dbReference type="FunCoup" id="Q9FK93">
    <property type="interactions" value="86"/>
</dbReference>
<dbReference type="iPTMnet" id="Q9FK93"/>
<dbReference type="PaxDb" id="3702-AT5G39680.1"/>
<dbReference type="ProteomicsDB" id="249287"/>
<dbReference type="EnsemblPlants" id="AT5G39680.1">
    <property type="protein sequence ID" value="AT5G39680.1"/>
    <property type="gene ID" value="AT5G39680"/>
</dbReference>
<dbReference type="GeneID" id="833964"/>
<dbReference type="Gramene" id="AT5G39680.1">
    <property type="protein sequence ID" value="AT5G39680.1"/>
    <property type="gene ID" value="AT5G39680"/>
</dbReference>
<dbReference type="KEGG" id="ath:AT5G39680"/>
<dbReference type="Araport" id="AT5G39680"/>
<dbReference type="TAIR" id="AT5G39680">
    <property type="gene designation" value="EMB2744"/>
</dbReference>
<dbReference type="eggNOG" id="KOG4197">
    <property type="taxonomic scope" value="Eukaryota"/>
</dbReference>
<dbReference type="HOGENOM" id="CLU_002706_15_1_1"/>
<dbReference type="InParanoid" id="Q9FK93"/>
<dbReference type="OMA" id="CHGYVLK"/>
<dbReference type="PhylomeDB" id="Q9FK93"/>
<dbReference type="PRO" id="PR:Q9FK93"/>
<dbReference type="Proteomes" id="UP000006548">
    <property type="component" value="Chromosome 5"/>
</dbReference>
<dbReference type="ExpressionAtlas" id="Q9FK93">
    <property type="expression patterns" value="baseline and differential"/>
</dbReference>
<dbReference type="GO" id="GO:0003723">
    <property type="term" value="F:RNA binding"/>
    <property type="evidence" value="ECO:0007669"/>
    <property type="project" value="InterPro"/>
</dbReference>
<dbReference type="GO" id="GO:0008270">
    <property type="term" value="F:zinc ion binding"/>
    <property type="evidence" value="ECO:0007669"/>
    <property type="project" value="InterPro"/>
</dbReference>
<dbReference type="GO" id="GO:0009451">
    <property type="term" value="P:RNA modification"/>
    <property type="evidence" value="ECO:0007669"/>
    <property type="project" value="InterPro"/>
</dbReference>
<dbReference type="FunFam" id="1.25.40.10:FF:002957">
    <property type="entry name" value="Pentatricopeptide repeat-containing protein At5g39680"/>
    <property type="match status" value="1"/>
</dbReference>
<dbReference type="FunFam" id="1.25.40.10:FF:003679">
    <property type="entry name" value="Pentatricopeptide repeat-containing protein At5g39680"/>
    <property type="match status" value="1"/>
</dbReference>
<dbReference type="FunFam" id="1.25.40.10:FF:002298">
    <property type="entry name" value="Putative pentatricopeptide repeat family protein"/>
    <property type="match status" value="1"/>
</dbReference>
<dbReference type="Gene3D" id="1.25.40.10">
    <property type="entry name" value="Tetratricopeptide repeat domain"/>
    <property type="match status" value="3"/>
</dbReference>
<dbReference type="InterPro" id="IPR032867">
    <property type="entry name" value="DYW_dom"/>
</dbReference>
<dbReference type="InterPro" id="IPR046848">
    <property type="entry name" value="E_motif"/>
</dbReference>
<dbReference type="InterPro" id="IPR002885">
    <property type="entry name" value="Pentatricopeptide_rpt"/>
</dbReference>
<dbReference type="InterPro" id="IPR046960">
    <property type="entry name" value="PPR_At4g14850-like_plant"/>
</dbReference>
<dbReference type="InterPro" id="IPR011990">
    <property type="entry name" value="TPR-like_helical_dom_sf"/>
</dbReference>
<dbReference type="NCBIfam" id="TIGR00756">
    <property type="entry name" value="PPR"/>
    <property type="match status" value="3"/>
</dbReference>
<dbReference type="PANTHER" id="PTHR47926">
    <property type="entry name" value="PENTATRICOPEPTIDE REPEAT-CONTAINING PROTEIN"/>
    <property type="match status" value="1"/>
</dbReference>
<dbReference type="Pfam" id="PF14432">
    <property type="entry name" value="DYW_deaminase"/>
    <property type="match status" value="1"/>
</dbReference>
<dbReference type="Pfam" id="PF20431">
    <property type="entry name" value="E_motif"/>
    <property type="match status" value="1"/>
</dbReference>
<dbReference type="Pfam" id="PF01535">
    <property type="entry name" value="PPR"/>
    <property type="match status" value="4"/>
</dbReference>
<dbReference type="Pfam" id="PF13041">
    <property type="entry name" value="PPR_2"/>
    <property type="match status" value="2"/>
</dbReference>
<dbReference type="PROSITE" id="PS51375">
    <property type="entry name" value="PPR"/>
    <property type="match status" value="13"/>
</dbReference>
<keyword id="KW-0007">Acetylation</keyword>
<keyword id="KW-1185">Reference proteome</keyword>
<keyword id="KW-0677">Repeat</keyword>
<protein>
    <recommendedName>
        <fullName>Pentatricopeptide repeat-containing protein At5g39680</fullName>
    </recommendedName>
    <alternativeName>
        <fullName>Protein EMBRYO DEFECTIVE 2744</fullName>
    </alternativeName>
</protein>